<proteinExistence type="inferred from homology"/>
<dbReference type="EC" id="7.-.-.-" evidence="1"/>
<dbReference type="EMBL" id="CP001113">
    <property type="protein sequence ID" value="ACF62598.1"/>
    <property type="molecule type" value="Genomic_DNA"/>
</dbReference>
<dbReference type="RefSeq" id="WP_000915594.1">
    <property type="nucleotide sequence ID" value="NZ_CCMR01000003.1"/>
</dbReference>
<dbReference type="SMR" id="B4T594"/>
<dbReference type="KEGG" id="see:SNSL254_A1567"/>
<dbReference type="HOGENOM" id="CLU_010808_2_1_6"/>
<dbReference type="Proteomes" id="UP000008824">
    <property type="component" value="Chromosome"/>
</dbReference>
<dbReference type="GO" id="GO:0005886">
    <property type="term" value="C:plasma membrane"/>
    <property type="evidence" value="ECO:0007669"/>
    <property type="project" value="UniProtKB-SubCell"/>
</dbReference>
<dbReference type="GO" id="GO:0051539">
    <property type="term" value="F:4 iron, 4 sulfur cluster binding"/>
    <property type="evidence" value="ECO:0007669"/>
    <property type="project" value="UniProtKB-KW"/>
</dbReference>
<dbReference type="GO" id="GO:0009055">
    <property type="term" value="F:electron transfer activity"/>
    <property type="evidence" value="ECO:0007669"/>
    <property type="project" value="InterPro"/>
</dbReference>
<dbReference type="GO" id="GO:0046872">
    <property type="term" value="F:metal ion binding"/>
    <property type="evidence" value="ECO:0007669"/>
    <property type="project" value="UniProtKB-KW"/>
</dbReference>
<dbReference type="GO" id="GO:0022900">
    <property type="term" value="P:electron transport chain"/>
    <property type="evidence" value="ECO:0007669"/>
    <property type="project" value="UniProtKB-UniRule"/>
</dbReference>
<dbReference type="Gene3D" id="3.30.70.20">
    <property type="match status" value="1"/>
</dbReference>
<dbReference type="Gene3D" id="3.40.50.11540">
    <property type="entry name" value="NADH-ubiquinone oxidoreductase 51kDa subunit"/>
    <property type="match status" value="1"/>
</dbReference>
<dbReference type="HAMAP" id="MF_00461">
    <property type="entry name" value="RsxC_RnfC"/>
    <property type="match status" value="1"/>
</dbReference>
<dbReference type="InterPro" id="IPR017896">
    <property type="entry name" value="4Fe4S_Fe-S-bd"/>
</dbReference>
<dbReference type="InterPro" id="IPR017900">
    <property type="entry name" value="4Fe4S_Fe_S_CS"/>
</dbReference>
<dbReference type="InterPro" id="IPR010208">
    <property type="entry name" value="Ion_transpt_RnfC/RsxC"/>
</dbReference>
<dbReference type="InterPro" id="IPR011538">
    <property type="entry name" value="Nuo51_FMN-bd"/>
</dbReference>
<dbReference type="InterPro" id="IPR037225">
    <property type="entry name" value="Nuo51_FMN-bd_sf"/>
</dbReference>
<dbReference type="InterPro" id="IPR026902">
    <property type="entry name" value="RnfC_N"/>
</dbReference>
<dbReference type="InterPro" id="IPR019554">
    <property type="entry name" value="Soluble_ligand-bd"/>
</dbReference>
<dbReference type="NCBIfam" id="NF003454">
    <property type="entry name" value="PRK05035.1"/>
    <property type="match status" value="1"/>
</dbReference>
<dbReference type="NCBIfam" id="TIGR01945">
    <property type="entry name" value="rnfC"/>
    <property type="match status" value="1"/>
</dbReference>
<dbReference type="PANTHER" id="PTHR43034">
    <property type="entry name" value="ION-TRANSLOCATING OXIDOREDUCTASE COMPLEX SUBUNIT C"/>
    <property type="match status" value="1"/>
</dbReference>
<dbReference type="PANTHER" id="PTHR43034:SF2">
    <property type="entry name" value="ION-TRANSLOCATING OXIDOREDUCTASE COMPLEX SUBUNIT C"/>
    <property type="match status" value="1"/>
</dbReference>
<dbReference type="Pfam" id="PF01512">
    <property type="entry name" value="Complex1_51K"/>
    <property type="match status" value="1"/>
</dbReference>
<dbReference type="Pfam" id="PF12838">
    <property type="entry name" value="Fer4_7"/>
    <property type="match status" value="1"/>
</dbReference>
<dbReference type="Pfam" id="PF13375">
    <property type="entry name" value="RnfC_N"/>
    <property type="match status" value="1"/>
</dbReference>
<dbReference type="Pfam" id="PF10531">
    <property type="entry name" value="SLBB"/>
    <property type="match status" value="1"/>
</dbReference>
<dbReference type="SUPFAM" id="SSF46548">
    <property type="entry name" value="alpha-helical ferredoxin"/>
    <property type="match status" value="1"/>
</dbReference>
<dbReference type="SUPFAM" id="SSF142019">
    <property type="entry name" value="Nqo1 FMN-binding domain-like"/>
    <property type="match status" value="1"/>
</dbReference>
<dbReference type="PROSITE" id="PS00198">
    <property type="entry name" value="4FE4S_FER_1"/>
    <property type="match status" value="2"/>
</dbReference>
<dbReference type="PROSITE" id="PS51379">
    <property type="entry name" value="4FE4S_FER_2"/>
    <property type="match status" value="2"/>
</dbReference>
<feature type="chain" id="PRO_1000125366" description="Ion-translocating oxidoreductase complex subunit C">
    <location>
        <begin position="1"/>
        <end position="735"/>
    </location>
</feature>
<feature type="domain" description="4Fe-4S ferredoxin-type 1" evidence="1">
    <location>
        <begin position="368"/>
        <end position="397"/>
    </location>
</feature>
<feature type="domain" description="4Fe-4S ferredoxin-type 2" evidence="1">
    <location>
        <begin position="407"/>
        <end position="436"/>
    </location>
</feature>
<feature type="region of interest" description="Disordered" evidence="2">
    <location>
        <begin position="562"/>
        <end position="713"/>
    </location>
</feature>
<feature type="binding site" evidence="1">
    <location>
        <position position="377"/>
    </location>
    <ligand>
        <name>[4Fe-4S] cluster</name>
        <dbReference type="ChEBI" id="CHEBI:49883"/>
        <label>1</label>
    </ligand>
</feature>
<feature type="binding site" evidence="1">
    <location>
        <position position="380"/>
    </location>
    <ligand>
        <name>[4Fe-4S] cluster</name>
        <dbReference type="ChEBI" id="CHEBI:49883"/>
        <label>1</label>
    </ligand>
</feature>
<feature type="binding site" evidence="1">
    <location>
        <position position="383"/>
    </location>
    <ligand>
        <name>[4Fe-4S] cluster</name>
        <dbReference type="ChEBI" id="CHEBI:49883"/>
        <label>1</label>
    </ligand>
</feature>
<feature type="binding site" evidence="1">
    <location>
        <position position="387"/>
    </location>
    <ligand>
        <name>[4Fe-4S] cluster</name>
        <dbReference type="ChEBI" id="CHEBI:49883"/>
        <label>2</label>
    </ligand>
</feature>
<feature type="binding site" evidence="1">
    <location>
        <position position="416"/>
    </location>
    <ligand>
        <name>[4Fe-4S] cluster</name>
        <dbReference type="ChEBI" id="CHEBI:49883"/>
        <label>2</label>
    </ligand>
</feature>
<feature type="binding site" evidence="1">
    <location>
        <position position="419"/>
    </location>
    <ligand>
        <name>[4Fe-4S] cluster</name>
        <dbReference type="ChEBI" id="CHEBI:49883"/>
        <label>2</label>
    </ligand>
</feature>
<feature type="binding site" evidence="1">
    <location>
        <position position="422"/>
    </location>
    <ligand>
        <name>[4Fe-4S] cluster</name>
        <dbReference type="ChEBI" id="CHEBI:49883"/>
        <label>2</label>
    </ligand>
</feature>
<feature type="binding site" evidence="1">
    <location>
        <position position="426"/>
    </location>
    <ligand>
        <name>[4Fe-4S] cluster</name>
        <dbReference type="ChEBI" id="CHEBI:49883"/>
        <label>1</label>
    </ligand>
</feature>
<comment type="function">
    <text evidence="1">Part of a membrane-bound complex that couples electron transfer with translocation of ions across the membrane. Required to maintain the reduced state of SoxR.</text>
</comment>
<comment type="cofactor">
    <cofactor evidence="1">
        <name>[4Fe-4S] cluster</name>
        <dbReference type="ChEBI" id="CHEBI:49883"/>
    </cofactor>
    <text evidence="1">Binds 2 [4Fe-4S] clusters per subunit.</text>
</comment>
<comment type="subunit">
    <text evidence="1">The complex is composed of six subunits: RsxA, RsxB, RsxC, RsxD, RsxE and RsxG.</text>
</comment>
<comment type="subcellular location">
    <subcellularLocation>
        <location evidence="1">Cell inner membrane</location>
        <topology evidence="1">Peripheral membrane protein</topology>
    </subcellularLocation>
</comment>
<comment type="similarity">
    <text evidence="1">Belongs to the 4Fe4S bacterial-type ferredoxin family. RnfC subfamily.</text>
</comment>
<sequence length="735" mass="78569">MLKLFSAFRKDKIWDFDGGIHPPEMKSQSNGTPLRQVPLAPRFVIPLKQHIGAEGELCVSVGDRVLRGQALTRGRGRMLPVHAPTSGTVIAIAPHSTAHPSALAELSVIIDADGEDRWIEREGWSDYRAHSREALIERIHQYGVAGLGGAGFPTGVKLQGGGDKITTLIINAAECEPYITADDRLMQDCAAQIVEGIRILAHILQPREVLIGIEDNKPQAISMLRAVLADAHDISLRVIPTKYPSGGAKQLTQILTGKQVPHGGRSSDIGVLMQNVGTAYAVKRAVIDGEPITERVVTLTGEAVSRPGNVWARLGTPVRHLLNDAGFCPSADQMVIMGGPLMGFTLPWLDVPVVKITNCLLAPSVTEMGAPQEEKSCIRCSACADACPADLLPQQLYWFSKGQQHDKATAHHIADCIECGACAWVCPSNIPLVQYFRQEKAEINAIRLEEKRAAEAKARFEARQARLEREKAARLARHKSAAVQPAAKDQDAIAAALARVKEKQAQATQPVVIQAGSLPDNSAVIAAREARKAQARAKQAAHPVADSAISGGDPRKAAVEAAIARAKARKQEQQAGSEPAEPVDPRKAAVEAAIARAKVRKQEQQAGSEPAEPVDPRKAAVEAAIARAKARKHEQQAGSEPAEPADPRKAAVEAAIARAKARKQEQQAGSEPAEPVDPRKAAVEAAIARAKARKQEQQAGSEPAEPADPRKAAVAAAIARVQAKKAAQQQVVNED</sequence>
<reference key="1">
    <citation type="journal article" date="2011" name="J. Bacteriol.">
        <title>Comparative genomics of 28 Salmonella enterica isolates: evidence for CRISPR-mediated adaptive sublineage evolution.</title>
        <authorList>
            <person name="Fricke W.F."/>
            <person name="Mammel M.K."/>
            <person name="McDermott P.F."/>
            <person name="Tartera C."/>
            <person name="White D.G."/>
            <person name="Leclerc J.E."/>
            <person name="Ravel J."/>
            <person name="Cebula T.A."/>
        </authorList>
    </citation>
    <scope>NUCLEOTIDE SEQUENCE [LARGE SCALE GENOMIC DNA]</scope>
    <source>
        <strain>SL254</strain>
    </source>
</reference>
<organism>
    <name type="scientific">Salmonella newport (strain SL254)</name>
    <dbReference type="NCBI Taxonomy" id="423368"/>
    <lineage>
        <taxon>Bacteria</taxon>
        <taxon>Pseudomonadati</taxon>
        <taxon>Pseudomonadota</taxon>
        <taxon>Gammaproteobacteria</taxon>
        <taxon>Enterobacterales</taxon>
        <taxon>Enterobacteriaceae</taxon>
        <taxon>Salmonella</taxon>
    </lineage>
</organism>
<name>RSXC_SALNS</name>
<evidence type="ECO:0000255" key="1">
    <source>
        <dbReference type="HAMAP-Rule" id="MF_00461"/>
    </source>
</evidence>
<evidence type="ECO:0000256" key="2">
    <source>
        <dbReference type="SAM" id="MobiDB-lite"/>
    </source>
</evidence>
<keyword id="KW-0004">4Fe-4S</keyword>
<keyword id="KW-0997">Cell inner membrane</keyword>
<keyword id="KW-1003">Cell membrane</keyword>
<keyword id="KW-0249">Electron transport</keyword>
<keyword id="KW-0408">Iron</keyword>
<keyword id="KW-0411">Iron-sulfur</keyword>
<keyword id="KW-0472">Membrane</keyword>
<keyword id="KW-0479">Metal-binding</keyword>
<keyword id="KW-0677">Repeat</keyword>
<keyword id="KW-1278">Translocase</keyword>
<keyword id="KW-0813">Transport</keyword>
<protein>
    <recommendedName>
        <fullName evidence="1">Ion-translocating oxidoreductase complex subunit C</fullName>
        <ecNumber evidence="1">7.-.-.-</ecNumber>
    </recommendedName>
    <alternativeName>
        <fullName evidence="1">Rsx electron transport complex subunit C</fullName>
    </alternativeName>
</protein>
<gene>
    <name evidence="1" type="primary">rsxC</name>
    <name type="ordered locus">SNSL254_A1567</name>
</gene>
<accession>B4T594</accession>